<comment type="function">
    <text evidence="2">Regulates myosin phosphatase activity.</text>
</comment>
<comment type="subunit">
    <text evidence="2 5">PP1 comprises a catalytic subunit, PPP1CA, PPP1CB or PPP1CC, and one or several targeting or regulatory subunits. PPP1R12C mediates binding to myosin. Interacts via its N-terminus with PPP1CB. Interacts with IL16. Interacts with the coiled-coil domain of MPRIP. Interacts with NOD2 (By similarity).</text>
</comment>
<comment type="subcellular location">
    <subcellularLocation>
        <location evidence="2">Cytoplasm</location>
    </subcellularLocation>
    <subcellularLocation>
        <location evidence="2">Cytoplasm</location>
        <location evidence="2">Cytoskeleton</location>
        <location evidence="2">Stress fiber</location>
    </subcellularLocation>
</comment>
<comment type="PTM">
    <text evidence="1">Phosphorylation at Thr-560 is essential for its interaction with PPP1CB.</text>
</comment>
<name>PP12C_MOUSE</name>
<evidence type="ECO:0000250" key="1"/>
<evidence type="ECO:0000250" key="2">
    <source>
        <dbReference type="UniProtKB" id="Q9BZL4"/>
    </source>
</evidence>
<evidence type="ECO:0000255" key="3"/>
<evidence type="ECO:0000256" key="4">
    <source>
        <dbReference type="SAM" id="MobiDB-lite"/>
    </source>
</evidence>
<evidence type="ECO:0000269" key="5">
    <source>
    </source>
</evidence>
<evidence type="ECO:0000303" key="6">
    <source>
    </source>
</evidence>
<evidence type="ECO:0000305" key="7"/>
<evidence type="ECO:0000312" key="8">
    <source>
        <dbReference type="EMBL" id="BAB27215.1"/>
    </source>
</evidence>
<evidence type="ECO:0000312" key="9">
    <source>
        <dbReference type="EMBL" id="BAE26017.1"/>
    </source>
</evidence>
<evidence type="ECO:0000312" key="10">
    <source>
        <dbReference type="MGI" id="MGI:1924258"/>
    </source>
</evidence>
<evidence type="ECO:0007744" key="11">
    <source>
    </source>
</evidence>
<protein>
    <recommendedName>
        <fullName>Protein phosphatase 1 regulatory subunit 12C</fullName>
    </recommendedName>
    <alternativeName>
        <fullName>Protein phosphatase 1 myosin-binding subunit of 85 kDa</fullName>
        <shortName>Protein phosphatase 1 myosin-binding subunit p85</shortName>
    </alternativeName>
</protein>
<sequence>MSGEDGPAAGPGAAAAAAAARERRQEQLRQWGARAGADPGPGERRARTVRFERAAEFLAACAGGDLDEARLMLRAADPGPGSGAASDPAVPPPARAVLDSTNADGISALHQACIDENLEVVRFLVEQGATVNQADNEGWTPLHVAASCGYLDIARYLLSHGANIAAVNSDGDLPLDLAESDAMEGLLKAEITRRGVDVEAAKRAEEELLLHDTRCWLNGGAMPEARHPRTGASALHVAAAKGYIEVMRLLLQAGYDTELRDGDGWTPLHAAAHWGVEDACRLLAEHGGGMDSLTHAGQRPCDLADEDVMNLLEELAQKQEDLRNQKEGSQGRGQESQVPSSSKHRRSSVCRLSSREKISLQDLSKERRPGGAGGPPIGDEDEGGEASAEHPAVEPRALNGVSSPVSSNPKSPVLPEEAPFSRRFGLQKTGSTGALGPSERRATEGVLGLQRSASSSLLEKASTQAREPRLARITPTPAQKVPEPFTLYEAATPPSLDHSVPPSRREPGSIVKPNVLTASAAPLADSRDRRRSYQMPVRDEESESQRKARSRLMRQSRRSTQGVTLTDLKEAEKVAGKVPEPEQPALPSLDPSRRPRVPGVENAEGPAQREAPEGQGQGPQAAREHRKAGHERRGPAEGEEAGPAERSPECSTVDGGSQVRRQHSQRDLVLESKQEHEEPDGGFRKMYTELRRENERLREALTETTLRLAQLKVELERATQRQERFAERPALLELERFERRALERKAAELEEELKALSDLRADNQRLKDENAALIRVISKLSK</sequence>
<gene>
    <name evidence="10" type="primary">Ppp1r12c</name>
    <name evidence="6" type="synonym">Mbs85</name>
</gene>
<reference evidence="9" key="1">
    <citation type="journal article" date="2005" name="Science">
        <title>The transcriptional landscape of the mammalian genome.</title>
        <authorList>
            <person name="Carninci P."/>
            <person name="Kasukawa T."/>
            <person name="Katayama S."/>
            <person name="Gough J."/>
            <person name="Frith M.C."/>
            <person name="Maeda N."/>
            <person name="Oyama R."/>
            <person name="Ravasi T."/>
            <person name="Lenhard B."/>
            <person name="Wells C."/>
            <person name="Kodzius R."/>
            <person name="Shimokawa K."/>
            <person name="Bajic V.B."/>
            <person name="Brenner S.E."/>
            <person name="Batalov S."/>
            <person name="Forrest A.R."/>
            <person name="Zavolan M."/>
            <person name="Davis M.J."/>
            <person name="Wilming L.G."/>
            <person name="Aidinis V."/>
            <person name="Allen J.E."/>
            <person name="Ambesi-Impiombato A."/>
            <person name="Apweiler R."/>
            <person name="Aturaliya R.N."/>
            <person name="Bailey T.L."/>
            <person name="Bansal M."/>
            <person name="Baxter L."/>
            <person name="Beisel K.W."/>
            <person name="Bersano T."/>
            <person name="Bono H."/>
            <person name="Chalk A.M."/>
            <person name="Chiu K.P."/>
            <person name="Choudhary V."/>
            <person name="Christoffels A."/>
            <person name="Clutterbuck D.R."/>
            <person name="Crowe M.L."/>
            <person name="Dalla E."/>
            <person name="Dalrymple B.P."/>
            <person name="de Bono B."/>
            <person name="Della Gatta G."/>
            <person name="di Bernardo D."/>
            <person name="Down T."/>
            <person name="Engstrom P."/>
            <person name="Fagiolini M."/>
            <person name="Faulkner G."/>
            <person name="Fletcher C.F."/>
            <person name="Fukushima T."/>
            <person name="Furuno M."/>
            <person name="Futaki S."/>
            <person name="Gariboldi M."/>
            <person name="Georgii-Hemming P."/>
            <person name="Gingeras T.R."/>
            <person name="Gojobori T."/>
            <person name="Green R.E."/>
            <person name="Gustincich S."/>
            <person name="Harbers M."/>
            <person name="Hayashi Y."/>
            <person name="Hensch T.K."/>
            <person name="Hirokawa N."/>
            <person name="Hill D."/>
            <person name="Huminiecki L."/>
            <person name="Iacono M."/>
            <person name="Ikeo K."/>
            <person name="Iwama A."/>
            <person name="Ishikawa T."/>
            <person name="Jakt M."/>
            <person name="Kanapin A."/>
            <person name="Katoh M."/>
            <person name="Kawasawa Y."/>
            <person name="Kelso J."/>
            <person name="Kitamura H."/>
            <person name="Kitano H."/>
            <person name="Kollias G."/>
            <person name="Krishnan S.P."/>
            <person name="Kruger A."/>
            <person name="Kummerfeld S.K."/>
            <person name="Kurochkin I.V."/>
            <person name="Lareau L.F."/>
            <person name="Lazarevic D."/>
            <person name="Lipovich L."/>
            <person name="Liu J."/>
            <person name="Liuni S."/>
            <person name="McWilliam S."/>
            <person name="Madan Babu M."/>
            <person name="Madera M."/>
            <person name="Marchionni L."/>
            <person name="Matsuda H."/>
            <person name="Matsuzawa S."/>
            <person name="Miki H."/>
            <person name="Mignone F."/>
            <person name="Miyake S."/>
            <person name="Morris K."/>
            <person name="Mottagui-Tabar S."/>
            <person name="Mulder N."/>
            <person name="Nakano N."/>
            <person name="Nakauchi H."/>
            <person name="Ng P."/>
            <person name="Nilsson R."/>
            <person name="Nishiguchi S."/>
            <person name="Nishikawa S."/>
            <person name="Nori F."/>
            <person name="Ohara O."/>
            <person name="Okazaki Y."/>
            <person name="Orlando V."/>
            <person name="Pang K.C."/>
            <person name="Pavan W.J."/>
            <person name="Pavesi G."/>
            <person name="Pesole G."/>
            <person name="Petrovsky N."/>
            <person name="Piazza S."/>
            <person name="Reed J."/>
            <person name="Reid J.F."/>
            <person name="Ring B.Z."/>
            <person name="Ringwald M."/>
            <person name="Rost B."/>
            <person name="Ruan Y."/>
            <person name="Salzberg S.L."/>
            <person name="Sandelin A."/>
            <person name="Schneider C."/>
            <person name="Schoenbach C."/>
            <person name="Sekiguchi K."/>
            <person name="Semple C.A."/>
            <person name="Seno S."/>
            <person name="Sessa L."/>
            <person name="Sheng Y."/>
            <person name="Shibata Y."/>
            <person name="Shimada H."/>
            <person name="Shimada K."/>
            <person name="Silva D."/>
            <person name="Sinclair B."/>
            <person name="Sperling S."/>
            <person name="Stupka E."/>
            <person name="Sugiura K."/>
            <person name="Sultana R."/>
            <person name="Takenaka Y."/>
            <person name="Taki K."/>
            <person name="Tammoja K."/>
            <person name="Tan S.L."/>
            <person name="Tang S."/>
            <person name="Taylor M.S."/>
            <person name="Tegner J."/>
            <person name="Teichmann S.A."/>
            <person name="Ueda H.R."/>
            <person name="van Nimwegen E."/>
            <person name="Verardo R."/>
            <person name="Wei C.L."/>
            <person name="Yagi K."/>
            <person name="Yamanishi H."/>
            <person name="Zabarovsky E."/>
            <person name="Zhu S."/>
            <person name="Zimmer A."/>
            <person name="Hide W."/>
            <person name="Bult C."/>
            <person name="Grimmond S.M."/>
            <person name="Teasdale R.D."/>
            <person name="Liu E.T."/>
            <person name="Brusic V."/>
            <person name="Quackenbush J."/>
            <person name="Wahlestedt C."/>
            <person name="Mattick J.S."/>
            <person name="Hume D.A."/>
            <person name="Kai C."/>
            <person name="Sasaki D."/>
            <person name="Tomaru Y."/>
            <person name="Fukuda S."/>
            <person name="Kanamori-Katayama M."/>
            <person name="Suzuki M."/>
            <person name="Aoki J."/>
            <person name="Arakawa T."/>
            <person name="Iida J."/>
            <person name="Imamura K."/>
            <person name="Itoh M."/>
            <person name="Kato T."/>
            <person name="Kawaji H."/>
            <person name="Kawagashira N."/>
            <person name="Kawashima T."/>
            <person name="Kojima M."/>
            <person name="Kondo S."/>
            <person name="Konno H."/>
            <person name="Nakano K."/>
            <person name="Ninomiya N."/>
            <person name="Nishio T."/>
            <person name="Okada M."/>
            <person name="Plessy C."/>
            <person name="Shibata K."/>
            <person name="Shiraki T."/>
            <person name="Suzuki S."/>
            <person name="Tagami M."/>
            <person name="Waki K."/>
            <person name="Watahiki A."/>
            <person name="Okamura-Oho Y."/>
            <person name="Suzuki H."/>
            <person name="Kawai J."/>
            <person name="Hayashizaki Y."/>
        </authorList>
    </citation>
    <scope>NUCLEOTIDE SEQUENCE [LARGE SCALE MRNA]</scope>
    <source>
        <strain evidence="8">C57BL/6J</strain>
        <tissue evidence="8">Embryonic stem cell</tissue>
        <tissue evidence="9">Lung</tissue>
    </source>
</reference>
<reference evidence="7" key="2">
    <citation type="journal article" date="2004" name="Mol. Biol. Cell">
        <title>p116Rip targets myosin phosphatase to the actin cytoskeleton and is essential for RhoA/ROCK-regulated neuritogenesis.</title>
        <authorList>
            <person name="Mulder J."/>
            <person name="Ariaens A."/>
            <person name="van den Boomen D."/>
            <person name="Moolenaar W.H."/>
        </authorList>
    </citation>
    <scope>INTERACTION WITH MPRIP</scope>
</reference>
<reference key="3">
    <citation type="journal article" date="2010" name="Cell">
        <title>A tissue-specific atlas of mouse protein phosphorylation and expression.</title>
        <authorList>
            <person name="Huttlin E.L."/>
            <person name="Jedrychowski M.P."/>
            <person name="Elias J.E."/>
            <person name="Goswami T."/>
            <person name="Rad R."/>
            <person name="Beausoleil S.A."/>
            <person name="Villen J."/>
            <person name="Haas W."/>
            <person name="Sowa M.E."/>
            <person name="Gygi S.P."/>
        </authorList>
    </citation>
    <scope>PHOSPHORYLATION [LARGE SCALE ANALYSIS] AT SER-403; THR-560 AND SER-647</scope>
    <scope>IDENTIFICATION BY MASS SPECTROMETRY [LARGE SCALE ANALYSIS]</scope>
    <source>
        <tissue>Brain</tissue>
        <tissue>Brown adipose tissue</tissue>
        <tissue>Lung</tissue>
        <tissue>Pancreas</tissue>
        <tissue>Spleen</tissue>
        <tissue>Testis</tissue>
    </source>
</reference>
<proteinExistence type="evidence at protein level"/>
<organism>
    <name type="scientific">Mus musculus</name>
    <name type="common">Mouse</name>
    <dbReference type="NCBI Taxonomy" id="10090"/>
    <lineage>
        <taxon>Eukaryota</taxon>
        <taxon>Metazoa</taxon>
        <taxon>Chordata</taxon>
        <taxon>Craniata</taxon>
        <taxon>Vertebrata</taxon>
        <taxon>Euteleostomi</taxon>
        <taxon>Mammalia</taxon>
        <taxon>Eutheria</taxon>
        <taxon>Euarchontoglires</taxon>
        <taxon>Glires</taxon>
        <taxon>Rodentia</taxon>
        <taxon>Myomorpha</taxon>
        <taxon>Muroidea</taxon>
        <taxon>Muridae</taxon>
        <taxon>Murinae</taxon>
        <taxon>Mus</taxon>
        <taxon>Mus</taxon>
    </lineage>
</organism>
<accession>Q3UMT1</accession>
<accession>Q9CWD5</accession>
<feature type="initiator methionine" description="Removed" evidence="2">
    <location>
        <position position="1"/>
    </location>
</feature>
<feature type="chain" id="PRO_0000315864" description="Protein phosphatase 1 regulatory subunit 12C">
    <location>
        <begin position="2"/>
        <end position="782"/>
    </location>
</feature>
<feature type="repeat" description="ANK 1" evidence="3">
    <location>
        <begin position="104"/>
        <end position="133"/>
    </location>
</feature>
<feature type="repeat" description="ANK 2" evidence="3">
    <location>
        <begin position="137"/>
        <end position="166"/>
    </location>
</feature>
<feature type="repeat" description="ANK 3" evidence="3">
    <location>
        <begin position="230"/>
        <end position="259"/>
    </location>
</feature>
<feature type="repeat" description="ANK 4" evidence="3">
    <location>
        <begin position="263"/>
        <end position="292"/>
    </location>
</feature>
<feature type="region of interest" description="Disordered" evidence="4">
    <location>
        <begin position="1"/>
        <end position="45"/>
    </location>
</feature>
<feature type="region of interest" description="Disordered" evidence="4">
    <location>
        <begin position="77"/>
        <end position="98"/>
    </location>
</feature>
<feature type="region of interest" description="Disordered" evidence="4">
    <location>
        <begin position="321"/>
        <end position="685"/>
    </location>
</feature>
<feature type="coiled-coil region" evidence="3">
    <location>
        <begin position="301"/>
        <end position="332"/>
    </location>
</feature>
<feature type="coiled-coil region" evidence="3">
    <location>
        <begin position="681"/>
        <end position="782"/>
    </location>
</feature>
<feature type="compositionally biased region" description="Low complexity" evidence="4">
    <location>
        <begin position="1"/>
        <end position="19"/>
    </location>
</feature>
<feature type="compositionally biased region" description="Low complexity" evidence="4">
    <location>
        <begin position="77"/>
        <end position="88"/>
    </location>
</feature>
<feature type="compositionally biased region" description="Polar residues" evidence="4">
    <location>
        <begin position="332"/>
        <end position="341"/>
    </location>
</feature>
<feature type="compositionally biased region" description="Basic and acidic residues" evidence="4">
    <location>
        <begin position="353"/>
        <end position="369"/>
    </location>
</feature>
<feature type="compositionally biased region" description="Low complexity" evidence="4">
    <location>
        <begin position="401"/>
        <end position="413"/>
    </location>
</feature>
<feature type="compositionally biased region" description="Polar residues" evidence="4">
    <location>
        <begin position="451"/>
        <end position="465"/>
    </location>
</feature>
<feature type="compositionally biased region" description="Basic and acidic residues" evidence="4">
    <location>
        <begin position="537"/>
        <end position="546"/>
    </location>
</feature>
<feature type="compositionally biased region" description="Basic residues" evidence="4">
    <location>
        <begin position="547"/>
        <end position="557"/>
    </location>
</feature>
<feature type="compositionally biased region" description="Basic and acidic residues" evidence="4">
    <location>
        <begin position="664"/>
        <end position="685"/>
    </location>
</feature>
<feature type="modified residue" description="N-acetylserine" evidence="2">
    <location>
        <position position="2"/>
    </location>
</feature>
<feature type="modified residue" description="Phosphoserine" evidence="11">
    <location>
        <position position="403"/>
    </location>
</feature>
<feature type="modified residue" description="Phosphoserine" evidence="2">
    <location>
        <position position="411"/>
    </location>
</feature>
<feature type="modified residue" description="Phosphoserine" evidence="2">
    <location>
        <position position="431"/>
    </location>
</feature>
<feature type="modified residue" description="Phosphoserine" evidence="2">
    <location>
        <position position="454"/>
    </location>
</feature>
<feature type="modified residue" description="Phosphoserine" evidence="2">
    <location>
        <position position="509"/>
    </location>
</feature>
<feature type="modified residue" description="Phosphothreonine" evidence="11">
    <location>
        <position position="560"/>
    </location>
</feature>
<feature type="modified residue" description="Phosphoserine" evidence="11">
    <location>
        <position position="647"/>
    </location>
</feature>
<feature type="sequence conflict" description="In Ref. 1; BAB27215." evidence="7" ref="1">
    <original>Q</original>
    <variation>R</variation>
    <location>
        <position position="30"/>
    </location>
</feature>
<dbReference type="EMBL" id="AK010836">
    <property type="protein sequence ID" value="BAB27215.1"/>
    <property type="molecule type" value="mRNA"/>
</dbReference>
<dbReference type="EMBL" id="AK144691">
    <property type="protein sequence ID" value="BAE26017.1"/>
    <property type="molecule type" value="mRNA"/>
</dbReference>
<dbReference type="CCDS" id="CCDS39735.1"/>
<dbReference type="RefSeq" id="NP_084110.2">
    <property type="nucleotide sequence ID" value="NM_029834.4"/>
</dbReference>
<dbReference type="SMR" id="Q3UMT1"/>
<dbReference type="BioGRID" id="231298">
    <property type="interactions" value="7"/>
</dbReference>
<dbReference type="FunCoup" id="Q3UMT1">
    <property type="interactions" value="985"/>
</dbReference>
<dbReference type="IntAct" id="Q3UMT1">
    <property type="interactions" value="2"/>
</dbReference>
<dbReference type="STRING" id="10090.ENSMUSP00000013886"/>
<dbReference type="GlyGen" id="Q3UMT1">
    <property type="glycosylation" value="2 sites, 1 O-linked glycan (1 site)"/>
</dbReference>
<dbReference type="iPTMnet" id="Q3UMT1"/>
<dbReference type="PhosphoSitePlus" id="Q3UMT1"/>
<dbReference type="SwissPalm" id="Q3UMT1"/>
<dbReference type="jPOST" id="Q3UMT1"/>
<dbReference type="PaxDb" id="10090-ENSMUSP00000013886"/>
<dbReference type="PeptideAtlas" id="Q3UMT1"/>
<dbReference type="ProteomicsDB" id="289371"/>
<dbReference type="Pumba" id="Q3UMT1"/>
<dbReference type="Antibodypedia" id="50850">
    <property type="antibodies" value="55 antibodies from 17 providers"/>
</dbReference>
<dbReference type="DNASU" id="232807"/>
<dbReference type="Ensembl" id="ENSMUST00000013886.9">
    <property type="protein sequence ID" value="ENSMUSP00000013886.9"/>
    <property type="gene ID" value="ENSMUSG00000019254.17"/>
</dbReference>
<dbReference type="GeneID" id="232807"/>
<dbReference type="KEGG" id="mmu:232807"/>
<dbReference type="UCSC" id="uc009exq.1">
    <property type="organism name" value="mouse"/>
</dbReference>
<dbReference type="AGR" id="MGI:1924258"/>
<dbReference type="CTD" id="54776"/>
<dbReference type="MGI" id="MGI:1924258">
    <property type="gene designation" value="Ppp1r12c"/>
</dbReference>
<dbReference type="VEuPathDB" id="HostDB:ENSMUSG00000019254"/>
<dbReference type="eggNOG" id="KOG0505">
    <property type="taxonomic scope" value="Eukaryota"/>
</dbReference>
<dbReference type="GeneTree" id="ENSGT00940000161425"/>
<dbReference type="InParanoid" id="Q3UMT1"/>
<dbReference type="OMA" id="AWGPDTQ"/>
<dbReference type="OrthoDB" id="19014at2759"/>
<dbReference type="PhylomeDB" id="Q3UMT1"/>
<dbReference type="TreeFam" id="TF105543"/>
<dbReference type="BioGRID-ORCS" id="232807">
    <property type="hits" value="1 hit in 115 CRISPR screens"/>
</dbReference>
<dbReference type="ChiTaRS" id="Ppp1r12c">
    <property type="organism name" value="mouse"/>
</dbReference>
<dbReference type="PRO" id="PR:Q3UMT1"/>
<dbReference type="Proteomes" id="UP000000589">
    <property type="component" value="Chromosome 7"/>
</dbReference>
<dbReference type="RNAct" id="Q3UMT1">
    <property type="molecule type" value="protein"/>
</dbReference>
<dbReference type="Bgee" id="ENSMUSG00000019254">
    <property type="expression patterns" value="Expressed in granulocyte and 229 other cell types or tissues"/>
</dbReference>
<dbReference type="ExpressionAtlas" id="Q3UMT1">
    <property type="expression patterns" value="baseline and differential"/>
</dbReference>
<dbReference type="GO" id="GO:0005737">
    <property type="term" value="C:cytoplasm"/>
    <property type="evidence" value="ECO:0007669"/>
    <property type="project" value="UniProtKB-SubCell"/>
</dbReference>
<dbReference type="GO" id="GO:0001725">
    <property type="term" value="C:stress fiber"/>
    <property type="evidence" value="ECO:0007669"/>
    <property type="project" value="UniProtKB-SubCell"/>
</dbReference>
<dbReference type="GO" id="GO:0019208">
    <property type="term" value="F:phosphatase regulator activity"/>
    <property type="evidence" value="ECO:0007669"/>
    <property type="project" value="InterPro"/>
</dbReference>
<dbReference type="GO" id="GO:0019901">
    <property type="term" value="F:protein kinase binding"/>
    <property type="evidence" value="ECO:0007669"/>
    <property type="project" value="InterPro"/>
</dbReference>
<dbReference type="GO" id="GO:0007165">
    <property type="term" value="P:signal transduction"/>
    <property type="evidence" value="ECO:0007669"/>
    <property type="project" value="InterPro"/>
</dbReference>
<dbReference type="CDD" id="cd21945">
    <property type="entry name" value="IPD_PPP1R12C"/>
    <property type="match status" value="1"/>
</dbReference>
<dbReference type="FunFam" id="1.25.40.20:FF:000004">
    <property type="entry name" value="Phosphatase 1 regulatory subunit 12A"/>
    <property type="match status" value="1"/>
</dbReference>
<dbReference type="FunFam" id="1.25.40.20:FF:000212">
    <property type="entry name" value="Protein phosphatase 1 regulatory subunit"/>
    <property type="match status" value="1"/>
</dbReference>
<dbReference type="Gene3D" id="6.10.140.390">
    <property type="match status" value="1"/>
</dbReference>
<dbReference type="Gene3D" id="6.10.250.1820">
    <property type="match status" value="1"/>
</dbReference>
<dbReference type="Gene3D" id="1.25.40.20">
    <property type="entry name" value="Ankyrin repeat-containing domain"/>
    <property type="match status" value="2"/>
</dbReference>
<dbReference type="InterPro" id="IPR002110">
    <property type="entry name" value="Ankyrin_rpt"/>
</dbReference>
<dbReference type="InterPro" id="IPR036770">
    <property type="entry name" value="Ankyrin_rpt-contain_sf"/>
</dbReference>
<dbReference type="InterPro" id="IPR017401">
    <property type="entry name" value="MYPT1/MYPT2/Mbs85"/>
</dbReference>
<dbReference type="InterPro" id="IPR051226">
    <property type="entry name" value="PP1_Regulatory_Subunit"/>
</dbReference>
<dbReference type="InterPro" id="IPR031775">
    <property type="entry name" value="PRKG1_interact"/>
</dbReference>
<dbReference type="PANTHER" id="PTHR24179">
    <property type="entry name" value="PROTEIN PHOSPHATASE 1 REGULATORY SUBUNIT 12"/>
    <property type="match status" value="1"/>
</dbReference>
<dbReference type="PANTHER" id="PTHR24179:SF27">
    <property type="entry name" value="PROTEIN PHOSPHATASE 1 REGULATORY SUBUNIT 12C"/>
    <property type="match status" value="1"/>
</dbReference>
<dbReference type="Pfam" id="PF12796">
    <property type="entry name" value="Ank_2"/>
    <property type="match status" value="2"/>
</dbReference>
<dbReference type="Pfam" id="PF15898">
    <property type="entry name" value="PRKG1_interact"/>
    <property type="match status" value="1"/>
</dbReference>
<dbReference type="PIRSF" id="PIRSF038141">
    <property type="entry name" value="PP1_12ABC_vert"/>
    <property type="match status" value="1"/>
</dbReference>
<dbReference type="PRINTS" id="PR01415">
    <property type="entry name" value="ANKYRIN"/>
</dbReference>
<dbReference type="SMART" id="SM00248">
    <property type="entry name" value="ANK"/>
    <property type="match status" value="4"/>
</dbReference>
<dbReference type="SUPFAM" id="SSF48403">
    <property type="entry name" value="Ankyrin repeat"/>
    <property type="match status" value="1"/>
</dbReference>
<dbReference type="PROSITE" id="PS50297">
    <property type="entry name" value="ANK_REP_REGION"/>
    <property type="match status" value="1"/>
</dbReference>
<dbReference type="PROSITE" id="PS50088">
    <property type="entry name" value="ANK_REPEAT"/>
    <property type="match status" value="4"/>
</dbReference>
<keyword id="KW-0007">Acetylation</keyword>
<keyword id="KW-0040">ANK repeat</keyword>
<keyword id="KW-0175">Coiled coil</keyword>
<keyword id="KW-0963">Cytoplasm</keyword>
<keyword id="KW-0206">Cytoskeleton</keyword>
<keyword id="KW-0597">Phosphoprotein</keyword>
<keyword id="KW-1185">Reference proteome</keyword>
<keyword id="KW-0677">Repeat</keyword>